<reference key="1">
    <citation type="journal article" date="2000" name="Nucleic Acids Res.">
        <title>Complete genome sequence of the alkaliphilic bacterium Bacillus halodurans and genomic sequence comparison with Bacillus subtilis.</title>
        <authorList>
            <person name="Takami H."/>
            <person name="Nakasone K."/>
            <person name="Takaki Y."/>
            <person name="Maeno G."/>
            <person name="Sasaki R."/>
            <person name="Masui N."/>
            <person name="Fuji F."/>
            <person name="Hirama C."/>
            <person name="Nakamura Y."/>
            <person name="Ogasawara N."/>
            <person name="Kuhara S."/>
            <person name="Horikoshi K."/>
        </authorList>
    </citation>
    <scope>NUCLEOTIDE SEQUENCE [LARGE SCALE GENOMIC DNA]</scope>
    <source>
        <strain>ATCC BAA-125 / DSM 18197 / FERM 7344 / JCM 9153 / C-125</strain>
    </source>
</reference>
<evidence type="ECO:0000255" key="1">
    <source>
        <dbReference type="HAMAP-Rule" id="MF_00569"/>
    </source>
</evidence>
<proteinExistence type="inferred from homology"/>
<feature type="chain" id="PRO_0000155815" description="Quinolinate synthase">
    <location>
        <begin position="1"/>
        <end position="367"/>
    </location>
</feature>
<feature type="binding site" evidence="1">
    <location>
        <position position="45"/>
    </location>
    <ligand>
        <name>iminosuccinate</name>
        <dbReference type="ChEBI" id="CHEBI:77875"/>
    </ligand>
</feature>
<feature type="binding site" evidence="1">
    <location>
        <position position="62"/>
    </location>
    <ligand>
        <name>iminosuccinate</name>
        <dbReference type="ChEBI" id="CHEBI:77875"/>
    </ligand>
</feature>
<feature type="binding site" evidence="1">
    <location>
        <position position="109"/>
    </location>
    <ligand>
        <name>[4Fe-4S] cluster</name>
        <dbReference type="ChEBI" id="CHEBI:49883"/>
    </ligand>
</feature>
<feature type="binding site" evidence="1">
    <location>
        <begin position="140"/>
        <end position="142"/>
    </location>
    <ligand>
        <name>iminosuccinate</name>
        <dbReference type="ChEBI" id="CHEBI:77875"/>
    </ligand>
</feature>
<feature type="binding site" evidence="1">
    <location>
        <position position="161"/>
    </location>
    <ligand>
        <name>iminosuccinate</name>
        <dbReference type="ChEBI" id="CHEBI:77875"/>
    </ligand>
</feature>
<feature type="binding site" evidence="1">
    <location>
        <position position="229"/>
    </location>
    <ligand>
        <name>[4Fe-4S] cluster</name>
        <dbReference type="ChEBI" id="CHEBI:49883"/>
    </ligand>
</feature>
<feature type="binding site" evidence="1">
    <location>
        <begin position="255"/>
        <end position="257"/>
    </location>
    <ligand>
        <name>iminosuccinate</name>
        <dbReference type="ChEBI" id="CHEBI:77875"/>
    </ligand>
</feature>
<feature type="binding site" evidence="1">
    <location>
        <position position="272"/>
    </location>
    <ligand>
        <name>iminosuccinate</name>
        <dbReference type="ChEBI" id="CHEBI:77875"/>
    </ligand>
</feature>
<feature type="binding site" evidence="1">
    <location>
        <position position="319"/>
    </location>
    <ligand>
        <name>[4Fe-4S] cluster</name>
        <dbReference type="ChEBI" id="CHEBI:49883"/>
    </ligand>
</feature>
<keyword id="KW-0004">4Fe-4S</keyword>
<keyword id="KW-0963">Cytoplasm</keyword>
<keyword id="KW-0408">Iron</keyword>
<keyword id="KW-0411">Iron-sulfur</keyword>
<keyword id="KW-0479">Metal-binding</keyword>
<keyword id="KW-0662">Pyridine nucleotide biosynthesis</keyword>
<keyword id="KW-1185">Reference proteome</keyword>
<keyword id="KW-0808">Transferase</keyword>
<name>NADA_HALH5</name>
<dbReference type="EC" id="2.5.1.72" evidence="1"/>
<dbReference type="EMBL" id="BA000004">
    <property type="protein sequence ID" value="BAB04939.1"/>
    <property type="molecule type" value="Genomic_DNA"/>
</dbReference>
<dbReference type="PIR" id="D83802">
    <property type="entry name" value="D83802"/>
</dbReference>
<dbReference type="RefSeq" id="WP_010897388.1">
    <property type="nucleotide sequence ID" value="NC_002570.2"/>
</dbReference>
<dbReference type="SMR" id="Q9KDJ3"/>
<dbReference type="STRING" id="272558.gene:10727114"/>
<dbReference type="KEGG" id="bha:BH1220"/>
<dbReference type="eggNOG" id="COG0379">
    <property type="taxonomic scope" value="Bacteria"/>
</dbReference>
<dbReference type="HOGENOM" id="CLU_047382_2_0_9"/>
<dbReference type="OrthoDB" id="9801204at2"/>
<dbReference type="UniPathway" id="UPA00253">
    <property type="reaction ID" value="UER00327"/>
</dbReference>
<dbReference type="Proteomes" id="UP000001258">
    <property type="component" value="Chromosome"/>
</dbReference>
<dbReference type="GO" id="GO:0005829">
    <property type="term" value="C:cytosol"/>
    <property type="evidence" value="ECO:0007669"/>
    <property type="project" value="TreeGrafter"/>
</dbReference>
<dbReference type="GO" id="GO:0051539">
    <property type="term" value="F:4 iron, 4 sulfur cluster binding"/>
    <property type="evidence" value="ECO:0007669"/>
    <property type="project" value="UniProtKB-KW"/>
</dbReference>
<dbReference type="GO" id="GO:0046872">
    <property type="term" value="F:metal ion binding"/>
    <property type="evidence" value="ECO:0007669"/>
    <property type="project" value="UniProtKB-KW"/>
</dbReference>
<dbReference type="GO" id="GO:0008987">
    <property type="term" value="F:quinolinate synthetase A activity"/>
    <property type="evidence" value="ECO:0007669"/>
    <property type="project" value="UniProtKB-UniRule"/>
</dbReference>
<dbReference type="GO" id="GO:0034628">
    <property type="term" value="P:'de novo' NAD biosynthetic process from L-aspartate"/>
    <property type="evidence" value="ECO:0007669"/>
    <property type="project" value="TreeGrafter"/>
</dbReference>
<dbReference type="FunFam" id="3.40.50.10800:FF:000001">
    <property type="entry name" value="Quinolinate synthase A"/>
    <property type="match status" value="1"/>
</dbReference>
<dbReference type="Gene3D" id="3.40.50.10800">
    <property type="entry name" value="NadA-like"/>
    <property type="match status" value="3"/>
</dbReference>
<dbReference type="HAMAP" id="MF_00569">
    <property type="entry name" value="NadA_type3"/>
    <property type="match status" value="1"/>
</dbReference>
<dbReference type="InterPro" id="IPR003473">
    <property type="entry name" value="NadA"/>
</dbReference>
<dbReference type="InterPro" id="IPR036094">
    <property type="entry name" value="NadA_sf"/>
</dbReference>
<dbReference type="InterPro" id="IPR023515">
    <property type="entry name" value="Quinolinate_synth_A_type3"/>
</dbReference>
<dbReference type="NCBIfam" id="TIGR00550">
    <property type="entry name" value="nadA"/>
    <property type="match status" value="1"/>
</dbReference>
<dbReference type="NCBIfam" id="NF006880">
    <property type="entry name" value="PRK09375.2-1"/>
    <property type="match status" value="1"/>
</dbReference>
<dbReference type="NCBIfam" id="NF006883">
    <property type="entry name" value="PRK09375.2-4"/>
    <property type="match status" value="1"/>
</dbReference>
<dbReference type="PANTHER" id="PTHR30573:SF0">
    <property type="entry name" value="QUINOLINATE SYNTHASE, CHLOROPLASTIC"/>
    <property type="match status" value="1"/>
</dbReference>
<dbReference type="PANTHER" id="PTHR30573">
    <property type="entry name" value="QUINOLINATE SYNTHETASE A"/>
    <property type="match status" value="1"/>
</dbReference>
<dbReference type="Pfam" id="PF02445">
    <property type="entry name" value="NadA"/>
    <property type="match status" value="1"/>
</dbReference>
<dbReference type="SUPFAM" id="SSF142754">
    <property type="entry name" value="NadA-like"/>
    <property type="match status" value="1"/>
</dbReference>
<gene>
    <name evidence="1" type="primary">nadA</name>
    <name type="ordered locus">BH1220</name>
</gene>
<organism>
    <name type="scientific">Halalkalibacterium halodurans (strain ATCC BAA-125 / DSM 18197 / FERM 7344 / JCM 9153 / C-125)</name>
    <name type="common">Bacillus halodurans</name>
    <dbReference type="NCBI Taxonomy" id="272558"/>
    <lineage>
        <taxon>Bacteria</taxon>
        <taxon>Bacillati</taxon>
        <taxon>Bacillota</taxon>
        <taxon>Bacilli</taxon>
        <taxon>Bacillales</taxon>
        <taxon>Bacillaceae</taxon>
        <taxon>Halalkalibacterium (ex Joshi et al. 2022)</taxon>
    </lineage>
</organism>
<protein>
    <recommendedName>
        <fullName evidence="1">Quinolinate synthase</fullName>
        <ecNumber evidence="1">2.5.1.72</ecNumber>
    </recommendedName>
</protein>
<accession>Q9KDJ3</accession>
<sequence>MNVFDTLQQSKKLPDVYRQMTRVELEERIRQHKERLGKKLLMLGHHYQRDEVFQFADQTGDSLQLAQIAAKEKEAQFIVFCGVHFMAETADLLTSEEQTVLLPDLRAGCSMADMADIHQTERAWERLQLMFGDTILPLTYVNSTAAIKAFCGRNGGATVTSSNAKKMLEWAFTQKERLLFLPDQHLGRNTAYELGIPLEAMAVWNPETERLETDQPLENIRVILWKGHCSVHEKFTVKHIEHLRKNEPDMSIIVHPECTHDVVIHADDAGSTHYIIKTIESADSGTKWAVGTEMNLVNRLANEHPDKEIVSLNPTMCPCLTMNRIDIEHLCWSLDQLAEGVFQHPIKVEDKDRGPALLALQRMLDRA</sequence>
<comment type="function">
    <text evidence="1">Catalyzes the condensation of iminoaspartate with dihydroxyacetone phosphate to form quinolinate.</text>
</comment>
<comment type="catalytic activity">
    <reaction evidence="1">
        <text>iminosuccinate + dihydroxyacetone phosphate = quinolinate + phosphate + 2 H2O + H(+)</text>
        <dbReference type="Rhea" id="RHEA:25888"/>
        <dbReference type="ChEBI" id="CHEBI:15377"/>
        <dbReference type="ChEBI" id="CHEBI:15378"/>
        <dbReference type="ChEBI" id="CHEBI:29959"/>
        <dbReference type="ChEBI" id="CHEBI:43474"/>
        <dbReference type="ChEBI" id="CHEBI:57642"/>
        <dbReference type="ChEBI" id="CHEBI:77875"/>
        <dbReference type="EC" id="2.5.1.72"/>
    </reaction>
    <physiologicalReaction direction="left-to-right" evidence="1">
        <dbReference type="Rhea" id="RHEA:25889"/>
    </physiologicalReaction>
</comment>
<comment type="cofactor">
    <cofactor evidence="1">
        <name>[4Fe-4S] cluster</name>
        <dbReference type="ChEBI" id="CHEBI:49883"/>
    </cofactor>
    <text evidence="1">Binds 1 [4Fe-4S] cluster per subunit.</text>
</comment>
<comment type="pathway">
    <text evidence="1">Cofactor biosynthesis; NAD(+) biosynthesis; quinolinate from iminoaspartate: step 1/1.</text>
</comment>
<comment type="subcellular location">
    <subcellularLocation>
        <location evidence="1">Cytoplasm</location>
    </subcellularLocation>
</comment>
<comment type="similarity">
    <text evidence="1">Belongs to the quinolinate synthase family. Type 3 subfamily.</text>
</comment>